<protein>
    <recommendedName>
        <fullName>Osteocalcin</fullName>
    </recommendedName>
    <alternativeName>
        <fullName>Bone Gla protein</fullName>
        <shortName>BGP</shortName>
    </alternativeName>
    <alternativeName>
        <fullName>Gamma-carboxyglutamic acid-containing protein</fullName>
    </alternativeName>
</protein>
<comment type="function">
    <text evidence="2 4">The carboxylated form is one of the main organic components of the bone matrix, which constitutes 1-2% of the total bone protein (PubMed:14586470). It acts as a negative regulator of bone formation and is required to limit bone formation without impairing bone resorption or mineralization (By similarity). The carboxylated form binds strongly to apatite and calcium (By similarity).</text>
</comment>
<comment type="function">
    <text evidence="2">The uncarboxylated form acts as a hormone secreted by osteoblasts, which regulates different cellular processes, such as energy metabolism, male fertility and brain development. Regulates of energy metabolism by acting as a hormone favoring pancreatic beta-cell proliferation, insulin secretion and sensitivity and energy expenditure. Uncarboxylated osteocalcin hormone also promotes testosterone production in the testes: acts as a ligand for G protein-coupled receptor GPRC6A at the surface of Leydig cells, initiating a signaling response that promotes the expression of enzymes required for testosterone synthesis in a CREB-dependent manner. Also acts as a regulator of brain development: osteocalcin hormone crosses the blood-brain barrier and acts as a ligand for GPR158 on neurons, initiating a signaling response that prevents neuronal apoptosis in the hippocampus, favors the synthesis of all monoamine neurotransmitters and inhibits that of gamma-aminobutyric acid (GABA). Osteocalcin also crosses the placenta during pregnancy and maternal osteocalcin is required for fetal brain development.</text>
</comment>
<comment type="subcellular location">
    <subcellularLocation>
        <location evidence="4">Secreted</location>
    </subcellularLocation>
</comment>
<comment type="PTM">
    <text evidence="2 3 4 5">Gamma-carboxyglutamate residues are formed by vitamin K dependent carboxylation by GGCX. These residues are essential for the binding of calcium (By similarity) (PubMed:14586470, PubMed:6332627). Decarboxylation promotes the hormone activity (By similarity).</text>
</comment>
<comment type="similarity">
    <text evidence="6">Belongs to the osteocalcin/matrix Gla protein family.</text>
</comment>
<keyword id="KW-0002">3D-structure</keyword>
<keyword id="KW-0091">Biomineralization</keyword>
<keyword id="KW-0106">Calcium</keyword>
<keyword id="KW-0903">Direct protein sequencing</keyword>
<keyword id="KW-1015">Disulfide bond</keyword>
<keyword id="KW-0301">Gamma-carboxyglutamic acid</keyword>
<keyword id="KW-0372">Hormone</keyword>
<keyword id="KW-0379">Hydroxylation</keyword>
<keyword id="KW-0479">Metal-binding</keyword>
<keyword id="KW-1185">Reference proteome</keyword>
<keyword id="KW-0964">Secreted</keyword>
<feature type="chain" id="PRO_0000148903" description="Osteocalcin">
    <location>
        <begin position="1"/>
        <end position="49"/>
    </location>
</feature>
<feature type="domain" description="Gla" evidence="3">
    <location>
        <begin position="1"/>
        <end position="47"/>
    </location>
</feature>
<feature type="binding site" evidence="1">
    <location>
        <position position="17"/>
    </location>
    <ligand>
        <name>Ca(2+)</name>
        <dbReference type="ChEBI" id="CHEBI:29108"/>
        <label>1</label>
    </ligand>
</feature>
<feature type="binding site" evidence="1">
    <location>
        <position position="21"/>
    </location>
    <ligand>
        <name>Ca(2+)</name>
        <dbReference type="ChEBI" id="CHEBI:29108"/>
        <label>2</label>
    </ligand>
</feature>
<feature type="binding site" evidence="1">
    <location>
        <position position="24"/>
    </location>
    <ligand>
        <name>Ca(2+)</name>
        <dbReference type="ChEBI" id="CHEBI:29108"/>
        <label>2</label>
    </ligand>
</feature>
<feature type="binding site" evidence="1">
    <location>
        <position position="24"/>
    </location>
    <ligand>
        <name>Ca(2+)</name>
        <dbReference type="ChEBI" id="CHEBI:29108"/>
        <label>3</label>
    </ligand>
</feature>
<feature type="binding site" evidence="1">
    <location>
        <position position="30"/>
    </location>
    <ligand>
        <name>Ca(2+)</name>
        <dbReference type="ChEBI" id="CHEBI:29108"/>
        <label>3</label>
    </ligand>
</feature>
<feature type="modified residue" description="Hydroxyproline" evidence="5">
    <location>
        <position position="9"/>
    </location>
</feature>
<feature type="modified residue" description="4-carboxyglutamate" evidence="3 4 5">
    <location>
        <position position="17"/>
    </location>
</feature>
<feature type="modified residue" description="4-carboxyglutamate" evidence="3 4 5">
    <location>
        <position position="21"/>
    </location>
</feature>
<feature type="modified residue" description="4-carboxyglutamate" evidence="3 4 5">
    <location>
        <position position="24"/>
    </location>
</feature>
<feature type="disulfide bond" evidence="3 4">
    <location>
        <begin position="23"/>
        <end position="29"/>
    </location>
</feature>
<feature type="helix" evidence="7">
    <location>
        <begin position="17"/>
        <end position="25"/>
    </location>
</feature>
<feature type="helix" evidence="7">
    <location>
        <begin position="27"/>
        <end position="36"/>
    </location>
</feature>
<feature type="helix" evidence="7">
    <location>
        <begin position="38"/>
        <end position="46"/>
    </location>
</feature>
<accession>Q8HYY9</accession>
<reference key="1">
    <citation type="journal article" date="1984" name="Biochem. Int.">
        <title>The amino acid sequences of goat, pig and wallaby osteocalcins.</title>
        <authorList>
            <person name="Huq N.L."/>
            <person name="Teh L.-C."/>
            <person name="Christie D.L."/>
            <person name="Chapman G.E."/>
        </authorList>
    </citation>
    <scope>PROTEIN SEQUENCE</scope>
    <scope>HYDROXYLATION AT PRO-9</scope>
    <scope>GAMMA-CARBOXYGLUTAMATION AT GLU-17; GLU-21 AND GLU-24</scope>
    <source>
        <tissue>Bone</tissue>
    </source>
</reference>
<reference key="2">
    <citation type="submission" date="2002-09" db="EMBL/GenBank/DDBJ databases">
        <title>Identification of Sus scrofa osteocalcin by comparative genomics.</title>
        <authorList>
            <person name="Laize V."/>
            <person name="Cancela M.L."/>
        </authorList>
    </citation>
    <scope>NUCLEOTIDE SEQUENCE [MRNA] OF 9-49</scope>
</reference>
<reference key="3">
    <citation type="journal article" date="2003" name="Nature">
        <title>Bone recognition mechanism of porcine osteocalcin from crystal structure.</title>
        <authorList>
            <person name="Hoang Q.Q."/>
            <person name="Sicheri F."/>
            <person name="Howard A.J."/>
            <person name="Yang D.S.C."/>
        </authorList>
    </citation>
    <scope>X-RAY CRYSTALLOGRAPHY (2.0 ANGSTROMS)</scope>
    <scope>GAMMA-CARBOXYGLUTAMATION AT GLU-17; GLU-21 AND GLU-24</scope>
    <scope>FUNCTION</scope>
    <scope>SUBCELLULAR LOCATION</scope>
    <scope>DISULFIDE BOND</scope>
</reference>
<proteinExistence type="evidence at protein level"/>
<dbReference type="EMBL" id="AY150038">
    <property type="protein sequence ID" value="AAN73020.1"/>
    <property type="molecule type" value="mRNA"/>
</dbReference>
<dbReference type="PDB" id="1Q8H">
    <property type="method" value="X-ray"/>
    <property type="resolution" value="2.00 A"/>
    <property type="chains" value="A=1-49"/>
</dbReference>
<dbReference type="PDBsum" id="1Q8H"/>
<dbReference type="SMR" id="Q8HYY9"/>
<dbReference type="STRING" id="9823.ENSSSCP00000006920"/>
<dbReference type="PaxDb" id="9823-ENSSSCP00000006919"/>
<dbReference type="eggNOG" id="ENOG502S85I">
    <property type="taxonomic scope" value="Eukaryota"/>
</dbReference>
<dbReference type="HOGENOM" id="CLU_160110_0_0_1"/>
<dbReference type="InParanoid" id="Q8HYY9"/>
<dbReference type="EvolutionaryTrace" id="Q8HYY9"/>
<dbReference type="Proteomes" id="UP000008227">
    <property type="component" value="Unplaced"/>
</dbReference>
<dbReference type="Proteomes" id="UP000314985">
    <property type="component" value="Unplaced"/>
</dbReference>
<dbReference type="Proteomes" id="UP000694570">
    <property type="component" value="Unplaced"/>
</dbReference>
<dbReference type="Proteomes" id="UP000694571">
    <property type="component" value="Unplaced"/>
</dbReference>
<dbReference type="Proteomes" id="UP000694720">
    <property type="component" value="Unplaced"/>
</dbReference>
<dbReference type="Proteomes" id="UP000694722">
    <property type="component" value="Unplaced"/>
</dbReference>
<dbReference type="Proteomes" id="UP000694723">
    <property type="component" value="Unplaced"/>
</dbReference>
<dbReference type="Proteomes" id="UP000694724">
    <property type="component" value="Unplaced"/>
</dbReference>
<dbReference type="Proteomes" id="UP000694725">
    <property type="component" value="Unplaced"/>
</dbReference>
<dbReference type="Proteomes" id="UP000694726">
    <property type="component" value="Unplaced"/>
</dbReference>
<dbReference type="Proteomes" id="UP000694727">
    <property type="component" value="Unplaced"/>
</dbReference>
<dbReference type="Proteomes" id="UP000694728">
    <property type="component" value="Unplaced"/>
</dbReference>
<dbReference type="GO" id="GO:0005737">
    <property type="term" value="C:cytoplasm"/>
    <property type="evidence" value="ECO:0000250"/>
    <property type="project" value="UniProtKB"/>
</dbReference>
<dbReference type="GO" id="GO:0005576">
    <property type="term" value="C:extracellular region"/>
    <property type="evidence" value="ECO:0000318"/>
    <property type="project" value="GO_Central"/>
</dbReference>
<dbReference type="GO" id="GO:0005509">
    <property type="term" value="F:calcium ion binding"/>
    <property type="evidence" value="ECO:0007669"/>
    <property type="project" value="InterPro"/>
</dbReference>
<dbReference type="GO" id="GO:0005179">
    <property type="term" value="F:hormone activity"/>
    <property type="evidence" value="ECO:0000250"/>
    <property type="project" value="UniProtKB"/>
</dbReference>
<dbReference type="GO" id="GO:0046848">
    <property type="term" value="F:hydroxyapatite binding"/>
    <property type="evidence" value="ECO:0000318"/>
    <property type="project" value="GO_Central"/>
</dbReference>
<dbReference type="GO" id="GO:0008147">
    <property type="term" value="F:structural constituent of bone"/>
    <property type="evidence" value="ECO:0000250"/>
    <property type="project" value="UniProtKB"/>
</dbReference>
<dbReference type="GO" id="GO:0031214">
    <property type="term" value="P:biomineral tissue development"/>
    <property type="evidence" value="ECO:0007669"/>
    <property type="project" value="UniProtKB-KW"/>
</dbReference>
<dbReference type="GO" id="GO:0060348">
    <property type="term" value="P:bone development"/>
    <property type="evidence" value="ECO:0000318"/>
    <property type="project" value="GO_Central"/>
</dbReference>
<dbReference type="GO" id="GO:0007420">
    <property type="term" value="P:brain development"/>
    <property type="evidence" value="ECO:0000250"/>
    <property type="project" value="UniProtKB"/>
</dbReference>
<dbReference type="GO" id="GO:0032869">
    <property type="term" value="P:cellular response to insulin stimulus"/>
    <property type="evidence" value="ECO:0000250"/>
    <property type="project" value="UniProtKB"/>
</dbReference>
<dbReference type="GO" id="GO:0050890">
    <property type="term" value="P:cognition"/>
    <property type="evidence" value="ECO:0000250"/>
    <property type="project" value="UniProtKB"/>
</dbReference>
<dbReference type="GO" id="GO:0042593">
    <property type="term" value="P:glucose homeostasis"/>
    <property type="evidence" value="ECO:0000250"/>
    <property type="project" value="UniProtKB"/>
</dbReference>
<dbReference type="GO" id="GO:0007611">
    <property type="term" value="P:learning or memory"/>
    <property type="evidence" value="ECO:0000250"/>
    <property type="project" value="UniProtKB"/>
</dbReference>
<dbReference type="GO" id="GO:1903011">
    <property type="term" value="P:negative regulation of bone development"/>
    <property type="evidence" value="ECO:0000250"/>
    <property type="project" value="UniProtKB"/>
</dbReference>
<dbReference type="GO" id="GO:0001649">
    <property type="term" value="P:osteoblast differentiation"/>
    <property type="evidence" value="ECO:0000318"/>
    <property type="project" value="GO_Central"/>
</dbReference>
<dbReference type="GO" id="GO:0001956">
    <property type="term" value="P:positive regulation of neurotransmitter secretion"/>
    <property type="evidence" value="ECO:0000250"/>
    <property type="project" value="UniProtKB"/>
</dbReference>
<dbReference type="GO" id="GO:0030500">
    <property type="term" value="P:regulation of bone mineralization"/>
    <property type="evidence" value="ECO:0007669"/>
    <property type="project" value="InterPro"/>
</dbReference>
<dbReference type="GO" id="GO:1900076">
    <property type="term" value="P:regulation of cellular response to insulin stimulus"/>
    <property type="evidence" value="ECO:0007669"/>
    <property type="project" value="InterPro"/>
</dbReference>
<dbReference type="GO" id="GO:2000224">
    <property type="term" value="P:regulation of testosterone biosynthetic process"/>
    <property type="evidence" value="ECO:0000250"/>
    <property type="project" value="UniProtKB"/>
</dbReference>
<dbReference type="GO" id="GO:0032571">
    <property type="term" value="P:response to vitamin K"/>
    <property type="evidence" value="ECO:0007669"/>
    <property type="project" value="InterPro"/>
</dbReference>
<dbReference type="GO" id="GO:0044342">
    <property type="term" value="P:type B pancreatic cell proliferation"/>
    <property type="evidence" value="ECO:0000250"/>
    <property type="project" value="UniProtKB"/>
</dbReference>
<dbReference type="DisProt" id="DP01982"/>
<dbReference type="InterPro" id="IPR035972">
    <property type="entry name" value="GLA-like_dom_SF"/>
</dbReference>
<dbReference type="InterPro" id="IPR000294">
    <property type="entry name" value="GLA_domain"/>
</dbReference>
<dbReference type="InterPro" id="IPR039176">
    <property type="entry name" value="Osteocalcin"/>
</dbReference>
<dbReference type="InterPro" id="IPR002384">
    <property type="entry name" value="Osteocalcin/MGP"/>
</dbReference>
<dbReference type="PANTHER" id="PTHR14235">
    <property type="entry name" value="OSTEOCALCIN"/>
    <property type="match status" value="1"/>
</dbReference>
<dbReference type="PANTHER" id="PTHR14235:SF0">
    <property type="entry name" value="OSTEOCALCIN"/>
    <property type="match status" value="1"/>
</dbReference>
<dbReference type="PRINTS" id="PR00002">
    <property type="entry name" value="GLABONE"/>
</dbReference>
<dbReference type="SMART" id="SM00069">
    <property type="entry name" value="GLA"/>
    <property type="match status" value="1"/>
</dbReference>
<dbReference type="SUPFAM" id="SSF57630">
    <property type="entry name" value="GLA-domain"/>
    <property type="match status" value="1"/>
</dbReference>
<dbReference type="PROSITE" id="PS00011">
    <property type="entry name" value="GLA_1"/>
    <property type="match status" value="1"/>
</dbReference>
<dbReference type="PROSITE" id="PS50998">
    <property type="entry name" value="GLA_2"/>
    <property type="match status" value="1"/>
</dbReference>
<gene>
    <name type="primary">BGLAP</name>
</gene>
<organism>
    <name type="scientific">Sus scrofa</name>
    <name type="common">Pig</name>
    <dbReference type="NCBI Taxonomy" id="9823"/>
    <lineage>
        <taxon>Eukaryota</taxon>
        <taxon>Metazoa</taxon>
        <taxon>Chordata</taxon>
        <taxon>Craniata</taxon>
        <taxon>Vertebrata</taxon>
        <taxon>Euteleostomi</taxon>
        <taxon>Mammalia</taxon>
        <taxon>Eutheria</taxon>
        <taxon>Laurasiatheria</taxon>
        <taxon>Artiodactyla</taxon>
        <taxon>Suina</taxon>
        <taxon>Suidae</taxon>
        <taxon>Sus</taxon>
    </lineage>
</organism>
<sequence>YLDHGLGAPAPYPDPLEPRREVCELNPDCDELADHIGFQEAYRRFYGIA</sequence>
<name>OSTCN_PIG</name>
<evidence type="ECO:0000250" key="1">
    <source>
        <dbReference type="UniProtKB" id="P02820"/>
    </source>
</evidence>
<evidence type="ECO:0000250" key="2">
    <source>
        <dbReference type="UniProtKB" id="P86546"/>
    </source>
</evidence>
<evidence type="ECO:0000255" key="3">
    <source>
        <dbReference type="PROSITE-ProRule" id="PRU00463"/>
    </source>
</evidence>
<evidence type="ECO:0000269" key="4">
    <source>
    </source>
</evidence>
<evidence type="ECO:0000269" key="5">
    <source>
    </source>
</evidence>
<evidence type="ECO:0000305" key="6"/>
<evidence type="ECO:0007829" key="7">
    <source>
        <dbReference type="PDB" id="1Q8H"/>
    </source>
</evidence>